<evidence type="ECO:0000255" key="1">
    <source>
        <dbReference type="HAMAP-Rule" id="MF_00158"/>
    </source>
</evidence>
<feature type="chain" id="PRO_0000128217" description="Pantothenate synthetase">
    <location>
        <begin position="1"/>
        <end position="282"/>
    </location>
</feature>
<feature type="active site" description="Proton donor" evidence="1">
    <location>
        <position position="37"/>
    </location>
</feature>
<feature type="binding site" evidence="1">
    <location>
        <begin position="30"/>
        <end position="37"/>
    </location>
    <ligand>
        <name>ATP</name>
        <dbReference type="ChEBI" id="CHEBI:30616"/>
    </ligand>
</feature>
<feature type="binding site" evidence="1">
    <location>
        <position position="60"/>
    </location>
    <ligand>
        <name>(R)-pantoate</name>
        <dbReference type="ChEBI" id="CHEBI:15980"/>
    </ligand>
</feature>
<feature type="binding site" evidence="1">
    <location>
        <position position="60"/>
    </location>
    <ligand>
        <name>beta-alanine</name>
        <dbReference type="ChEBI" id="CHEBI:57966"/>
    </ligand>
</feature>
<feature type="binding site" evidence="1">
    <location>
        <begin position="146"/>
        <end position="149"/>
    </location>
    <ligand>
        <name>ATP</name>
        <dbReference type="ChEBI" id="CHEBI:30616"/>
    </ligand>
</feature>
<feature type="binding site" evidence="1">
    <location>
        <position position="152"/>
    </location>
    <ligand>
        <name>(R)-pantoate</name>
        <dbReference type="ChEBI" id="CHEBI:15980"/>
    </ligand>
</feature>
<feature type="binding site" evidence="1">
    <location>
        <position position="175"/>
    </location>
    <ligand>
        <name>ATP</name>
        <dbReference type="ChEBI" id="CHEBI:30616"/>
    </ligand>
</feature>
<feature type="binding site" evidence="1">
    <location>
        <begin position="183"/>
        <end position="186"/>
    </location>
    <ligand>
        <name>ATP</name>
        <dbReference type="ChEBI" id="CHEBI:30616"/>
    </ligand>
</feature>
<organism>
    <name type="scientific">Campylobacter jejuni (strain RM1221)</name>
    <dbReference type="NCBI Taxonomy" id="195099"/>
    <lineage>
        <taxon>Bacteria</taxon>
        <taxon>Pseudomonadati</taxon>
        <taxon>Campylobacterota</taxon>
        <taxon>Epsilonproteobacteria</taxon>
        <taxon>Campylobacterales</taxon>
        <taxon>Campylobacteraceae</taxon>
        <taxon>Campylobacter</taxon>
    </lineage>
</organism>
<dbReference type="EC" id="6.3.2.1" evidence="1"/>
<dbReference type="EMBL" id="CP000025">
    <property type="protein sequence ID" value="AAW34931.1"/>
    <property type="molecule type" value="Genomic_DNA"/>
</dbReference>
<dbReference type="RefSeq" id="WP_002912443.1">
    <property type="nucleotide sequence ID" value="NC_003912.7"/>
</dbReference>
<dbReference type="SMR" id="Q5HWH4"/>
<dbReference type="KEGG" id="cjr:CJE0342"/>
<dbReference type="HOGENOM" id="CLU_047148_0_0_7"/>
<dbReference type="UniPathway" id="UPA00028">
    <property type="reaction ID" value="UER00005"/>
</dbReference>
<dbReference type="GO" id="GO:0005829">
    <property type="term" value="C:cytosol"/>
    <property type="evidence" value="ECO:0007669"/>
    <property type="project" value="TreeGrafter"/>
</dbReference>
<dbReference type="GO" id="GO:0005524">
    <property type="term" value="F:ATP binding"/>
    <property type="evidence" value="ECO:0007669"/>
    <property type="project" value="UniProtKB-KW"/>
</dbReference>
<dbReference type="GO" id="GO:0004592">
    <property type="term" value="F:pantoate-beta-alanine ligase activity"/>
    <property type="evidence" value="ECO:0007669"/>
    <property type="project" value="UniProtKB-UniRule"/>
</dbReference>
<dbReference type="GO" id="GO:0015940">
    <property type="term" value="P:pantothenate biosynthetic process"/>
    <property type="evidence" value="ECO:0007669"/>
    <property type="project" value="UniProtKB-UniRule"/>
</dbReference>
<dbReference type="CDD" id="cd00560">
    <property type="entry name" value="PanC"/>
    <property type="match status" value="1"/>
</dbReference>
<dbReference type="FunFam" id="3.30.1300.10:FF:000001">
    <property type="entry name" value="Pantothenate synthetase"/>
    <property type="match status" value="1"/>
</dbReference>
<dbReference type="FunFam" id="3.40.50.620:FF:000013">
    <property type="entry name" value="Pantothenate synthetase"/>
    <property type="match status" value="1"/>
</dbReference>
<dbReference type="Gene3D" id="3.40.50.620">
    <property type="entry name" value="HUPs"/>
    <property type="match status" value="1"/>
</dbReference>
<dbReference type="Gene3D" id="3.30.1300.10">
    <property type="entry name" value="Pantoate-beta-alanine ligase, C-terminal domain"/>
    <property type="match status" value="1"/>
</dbReference>
<dbReference type="HAMAP" id="MF_00158">
    <property type="entry name" value="PanC"/>
    <property type="match status" value="1"/>
</dbReference>
<dbReference type="InterPro" id="IPR004821">
    <property type="entry name" value="Cyt_trans-like"/>
</dbReference>
<dbReference type="InterPro" id="IPR003721">
    <property type="entry name" value="Pantoate_ligase"/>
</dbReference>
<dbReference type="InterPro" id="IPR042176">
    <property type="entry name" value="Pantoate_ligase_C"/>
</dbReference>
<dbReference type="InterPro" id="IPR014729">
    <property type="entry name" value="Rossmann-like_a/b/a_fold"/>
</dbReference>
<dbReference type="NCBIfam" id="TIGR00125">
    <property type="entry name" value="cyt_tran_rel"/>
    <property type="match status" value="1"/>
</dbReference>
<dbReference type="NCBIfam" id="TIGR00018">
    <property type="entry name" value="panC"/>
    <property type="match status" value="1"/>
</dbReference>
<dbReference type="PANTHER" id="PTHR21299">
    <property type="entry name" value="CYTIDYLATE KINASE/PANTOATE-BETA-ALANINE LIGASE"/>
    <property type="match status" value="1"/>
</dbReference>
<dbReference type="PANTHER" id="PTHR21299:SF1">
    <property type="entry name" value="PANTOATE--BETA-ALANINE LIGASE"/>
    <property type="match status" value="1"/>
</dbReference>
<dbReference type="Pfam" id="PF02569">
    <property type="entry name" value="Pantoate_ligase"/>
    <property type="match status" value="1"/>
</dbReference>
<dbReference type="SUPFAM" id="SSF52374">
    <property type="entry name" value="Nucleotidylyl transferase"/>
    <property type="match status" value="1"/>
</dbReference>
<comment type="function">
    <text evidence="1">Catalyzes the condensation of pantoate with beta-alanine in an ATP-dependent reaction via a pantoyl-adenylate intermediate.</text>
</comment>
<comment type="catalytic activity">
    <reaction evidence="1">
        <text>(R)-pantoate + beta-alanine + ATP = (R)-pantothenate + AMP + diphosphate + H(+)</text>
        <dbReference type="Rhea" id="RHEA:10912"/>
        <dbReference type="ChEBI" id="CHEBI:15378"/>
        <dbReference type="ChEBI" id="CHEBI:15980"/>
        <dbReference type="ChEBI" id="CHEBI:29032"/>
        <dbReference type="ChEBI" id="CHEBI:30616"/>
        <dbReference type="ChEBI" id="CHEBI:33019"/>
        <dbReference type="ChEBI" id="CHEBI:57966"/>
        <dbReference type="ChEBI" id="CHEBI:456215"/>
        <dbReference type="EC" id="6.3.2.1"/>
    </reaction>
</comment>
<comment type="pathway">
    <text evidence="1">Cofactor biosynthesis; (R)-pantothenate biosynthesis; (R)-pantothenate from (R)-pantoate and beta-alanine: step 1/1.</text>
</comment>
<comment type="subunit">
    <text evidence="1">Homodimer.</text>
</comment>
<comment type="subcellular location">
    <subcellularLocation>
        <location evidence="1">Cytoplasm</location>
    </subcellularLocation>
</comment>
<comment type="miscellaneous">
    <text evidence="1">The reaction proceeds by a bi uni uni bi ping pong mechanism.</text>
</comment>
<comment type="similarity">
    <text evidence="1">Belongs to the pantothenate synthetase family.</text>
</comment>
<proteinExistence type="inferred from homology"/>
<protein>
    <recommendedName>
        <fullName evidence="1">Pantothenate synthetase</fullName>
        <shortName evidence="1">PS</shortName>
        <ecNumber evidence="1">6.3.2.1</ecNumber>
    </recommendedName>
    <alternativeName>
        <fullName evidence="1">Pantoate--beta-alanine ligase</fullName>
    </alternativeName>
    <alternativeName>
        <fullName evidence="1">Pantoate-activating enzyme</fullName>
    </alternativeName>
</protein>
<sequence length="282" mass="31951">MEVITSIKEAKQTVKNWKSHNLSIGYVPTMGFLHDGHLSLVKNAKTQDKVIVSIFVNPMQFGPNEDFSSYPRDLERDIKMCQDNGVDMVFIPDAAQMYLKNFSTYVDMNTITDKLCGAKRLGHFRGVCTVLAKFFNILNPDIVYMGQKDAQQCVVVRHMVDDLNFDLKIQICPIIREEDGLAKSSRNVYLSEEERKASLAISQSIFLAEKLVQEGEKDTSKIIQAMKDILEKEKLIKIDYIELVDFNTMENIKNIADNVLGAVAAFVGKTRLIDNFLVQGLK</sequence>
<accession>Q5HWH4</accession>
<name>PANC_CAMJR</name>
<reference key="1">
    <citation type="journal article" date="2005" name="PLoS Biol.">
        <title>Major structural differences and novel potential virulence mechanisms from the genomes of multiple Campylobacter species.</title>
        <authorList>
            <person name="Fouts D.E."/>
            <person name="Mongodin E.F."/>
            <person name="Mandrell R.E."/>
            <person name="Miller W.G."/>
            <person name="Rasko D.A."/>
            <person name="Ravel J."/>
            <person name="Brinkac L.M."/>
            <person name="DeBoy R.T."/>
            <person name="Parker C.T."/>
            <person name="Daugherty S.C."/>
            <person name="Dodson R.J."/>
            <person name="Durkin A.S."/>
            <person name="Madupu R."/>
            <person name="Sullivan S.A."/>
            <person name="Shetty J.U."/>
            <person name="Ayodeji M.A."/>
            <person name="Shvartsbeyn A."/>
            <person name="Schatz M.C."/>
            <person name="Badger J.H."/>
            <person name="Fraser C.M."/>
            <person name="Nelson K.E."/>
        </authorList>
    </citation>
    <scope>NUCLEOTIDE SEQUENCE [LARGE SCALE GENOMIC DNA]</scope>
    <source>
        <strain>RM1221</strain>
    </source>
</reference>
<gene>
    <name evidence="1" type="primary">panC</name>
    <name type="ordered locus">CJE0342</name>
</gene>
<keyword id="KW-0067">ATP-binding</keyword>
<keyword id="KW-0963">Cytoplasm</keyword>
<keyword id="KW-0436">Ligase</keyword>
<keyword id="KW-0547">Nucleotide-binding</keyword>
<keyword id="KW-0566">Pantothenate biosynthesis</keyword>